<keyword id="KW-1003">Cell membrane</keyword>
<keyword id="KW-0472">Membrane</keyword>
<keyword id="KW-0677">Repeat</keyword>
<keyword id="KW-0812">Transmembrane</keyword>
<keyword id="KW-1133">Transmembrane helix</keyword>
<keyword id="KW-0813">Transport</keyword>
<proteinExistence type="inferred from homology"/>
<gene>
    <name type="ordered locus">YpAngola_A3793</name>
</gene>
<sequence length="552" mass="58702">MSAIALTVSMLALVAVLGLWIGNWKIYGVGLGIGGVLFGGIIVGHFAQTYQIVLNGDMLHFIQEFGLILFVYTIGIQVGPGFFSSLRVSGLRLNCFAILMVVVGGLVTAIIHKLFAVPLPIILGVFSGAVTNTPALGAAQQILTDLGSPPQLVSQMGMGYAMAYPFGICGILLVMWLIRLFFKINIDREAKAFDSSYGQNRELLQTMNVAVRNPNLHGLSVQDVPLLNSDEVVCSRLKRGDLLMVPMPATVIEIGDYLHLVGQRDALEKVRLVVGEEVDVTLSTAGTALQTARVVVTNEAVLGKKIRDLNLKQKYDVVITRLNRAGIELVASNSASLQFGDILNLVGRPEAIEAVSAIVGNAQQKLQQVQMLPVFIGVGLGVLLGSIPLFVPGFPAALRLGLAGGPLVVALILGRIGSIGKLYWFMPPSANLALRELGIVLFLSVVGLKSGGDFINTLVNGDGLAWIGYGAMITGIPLLTVGILARMLVKMNYLTLCGMLAGSMTDPPALAFANGLHPTSGAAALSYATVYPLAMFLRIMSPQILAVLFWTL</sequence>
<accession>A9R4H0</accession>
<evidence type="ECO:0000255" key="1">
    <source>
        <dbReference type="HAMAP-Rule" id="MF_01016"/>
    </source>
</evidence>
<reference key="1">
    <citation type="journal article" date="2010" name="J. Bacteriol.">
        <title>Genome sequence of the deep-rooted Yersinia pestis strain Angola reveals new insights into the evolution and pangenome of the plague bacterium.</title>
        <authorList>
            <person name="Eppinger M."/>
            <person name="Worsham P.L."/>
            <person name="Nikolich M.P."/>
            <person name="Riley D.R."/>
            <person name="Sebastian Y."/>
            <person name="Mou S."/>
            <person name="Achtman M."/>
            <person name="Lindler L.E."/>
            <person name="Ravel J."/>
        </authorList>
    </citation>
    <scope>NUCLEOTIDE SEQUENCE [LARGE SCALE GENOMIC DNA]</scope>
    <source>
        <strain>Angola</strain>
    </source>
</reference>
<dbReference type="EMBL" id="CP000901">
    <property type="protein sequence ID" value="ABX86306.1"/>
    <property type="molecule type" value="Genomic_DNA"/>
</dbReference>
<dbReference type="RefSeq" id="WP_002209634.1">
    <property type="nucleotide sequence ID" value="NZ_CP009935.1"/>
</dbReference>
<dbReference type="SMR" id="A9R4H0"/>
<dbReference type="KEGG" id="ypg:YpAngola_A3793"/>
<dbReference type="PATRIC" id="fig|349746.12.peg.506"/>
<dbReference type="GO" id="GO:0005886">
    <property type="term" value="C:plasma membrane"/>
    <property type="evidence" value="ECO:0007669"/>
    <property type="project" value="UniProtKB-SubCell"/>
</dbReference>
<dbReference type="GO" id="GO:0008324">
    <property type="term" value="F:monoatomic cation transmembrane transporter activity"/>
    <property type="evidence" value="ECO:0007669"/>
    <property type="project" value="InterPro"/>
</dbReference>
<dbReference type="GO" id="GO:0006813">
    <property type="term" value="P:potassium ion transport"/>
    <property type="evidence" value="ECO:0007669"/>
    <property type="project" value="InterPro"/>
</dbReference>
<dbReference type="Gene3D" id="3.30.70.1450">
    <property type="entry name" value="Regulator of K+ conductance, C-terminal domain"/>
    <property type="match status" value="2"/>
</dbReference>
<dbReference type="HAMAP" id="MF_01016">
    <property type="entry name" value="YidE"/>
    <property type="match status" value="1"/>
</dbReference>
<dbReference type="InterPro" id="IPR050144">
    <property type="entry name" value="AAE_transporter"/>
</dbReference>
<dbReference type="InterPro" id="IPR006037">
    <property type="entry name" value="RCK_C"/>
</dbReference>
<dbReference type="InterPro" id="IPR036721">
    <property type="entry name" value="RCK_C_sf"/>
</dbReference>
<dbReference type="InterPro" id="IPR023018">
    <property type="entry name" value="Transpt_YidE_put"/>
</dbReference>
<dbReference type="InterPro" id="IPR006512">
    <property type="entry name" value="YidE_YbjL"/>
</dbReference>
<dbReference type="NCBIfam" id="NF003007">
    <property type="entry name" value="PRK03818.1"/>
    <property type="match status" value="1"/>
</dbReference>
<dbReference type="NCBIfam" id="TIGR01625">
    <property type="entry name" value="YidE_YbjL_dupl"/>
    <property type="match status" value="2"/>
</dbReference>
<dbReference type="PANTHER" id="PTHR30445">
    <property type="entry name" value="K(+)_H(+) ANTIPORTER SUBUNIT KHTT"/>
    <property type="match status" value="1"/>
</dbReference>
<dbReference type="PANTHER" id="PTHR30445:SF3">
    <property type="entry name" value="TRANSPORT PROTEIN YIDE-RELATED"/>
    <property type="match status" value="1"/>
</dbReference>
<dbReference type="Pfam" id="PF06826">
    <property type="entry name" value="Asp-Al_Ex"/>
    <property type="match status" value="2"/>
</dbReference>
<dbReference type="Pfam" id="PF02080">
    <property type="entry name" value="TrkA_C"/>
    <property type="match status" value="2"/>
</dbReference>
<dbReference type="SUPFAM" id="SSF116726">
    <property type="entry name" value="TrkA C-terminal domain-like"/>
    <property type="match status" value="2"/>
</dbReference>
<dbReference type="PROSITE" id="PS51202">
    <property type="entry name" value="RCK_C"/>
    <property type="match status" value="2"/>
</dbReference>
<comment type="subcellular location">
    <subcellularLocation>
        <location evidence="1">Cell membrane</location>
        <topology evidence="1">Multi-pass membrane protein</topology>
    </subcellularLocation>
</comment>
<comment type="similarity">
    <text evidence="1">Belongs to the AAE transporter (TC 2.A.81) family. YidE subfamily.</text>
</comment>
<name>Y3793_YERPG</name>
<organism>
    <name type="scientific">Yersinia pestis bv. Antiqua (strain Angola)</name>
    <dbReference type="NCBI Taxonomy" id="349746"/>
    <lineage>
        <taxon>Bacteria</taxon>
        <taxon>Pseudomonadati</taxon>
        <taxon>Pseudomonadota</taxon>
        <taxon>Gammaproteobacteria</taxon>
        <taxon>Enterobacterales</taxon>
        <taxon>Yersiniaceae</taxon>
        <taxon>Yersinia</taxon>
    </lineage>
</organism>
<feature type="chain" id="PRO_1000135222" description="Putative transport protein YpAngola_A3793">
    <location>
        <begin position="1"/>
        <end position="552"/>
    </location>
</feature>
<feature type="transmembrane region" description="Helical" evidence="1">
    <location>
        <begin position="1"/>
        <end position="21"/>
    </location>
</feature>
<feature type="transmembrane region" description="Helical" evidence="1">
    <location>
        <begin position="26"/>
        <end position="46"/>
    </location>
</feature>
<feature type="transmembrane region" description="Helical" evidence="1">
    <location>
        <begin position="65"/>
        <end position="85"/>
    </location>
</feature>
<feature type="transmembrane region" description="Helical" evidence="1">
    <location>
        <begin position="96"/>
        <end position="116"/>
    </location>
</feature>
<feature type="transmembrane region" description="Helical" evidence="1">
    <location>
        <begin position="119"/>
        <end position="139"/>
    </location>
</feature>
<feature type="transmembrane region" description="Helical" evidence="1">
    <location>
        <begin position="158"/>
        <end position="178"/>
    </location>
</feature>
<feature type="transmembrane region" description="Helical" evidence="1">
    <location>
        <begin position="371"/>
        <end position="391"/>
    </location>
</feature>
<feature type="transmembrane region" description="Helical" evidence="1">
    <location>
        <begin position="393"/>
        <end position="413"/>
    </location>
</feature>
<feature type="transmembrane region" description="Helical" evidence="1">
    <location>
        <begin position="439"/>
        <end position="459"/>
    </location>
</feature>
<feature type="transmembrane region" description="Helical" evidence="1">
    <location>
        <begin position="464"/>
        <end position="484"/>
    </location>
</feature>
<feature type="transmembrane region" description="Helical" evidence="1">
    <location>
        <begin position="493"/>
        <end position="513"/>
    </location>
</feature>
<feature type="transmembrane region" description="Helical" evidence="1">
    <location>
        <begin position="530"/>
        <end position="550"/>
    </location>
</feature>
<feature type="domain" description="RCK C-terminal 1" evidence="1">
    <location>
        <begin position="192"/>
        <end position="276"/>
    </location>
</feature>
<feature type="domain" description="RCK C-terminal 2" evidence="1">
    <location>
        <begin position="279"/>
        <end position="361"/>
    </location>
</feature>
<protein>
    <recommendedName>
        <fullName evidence="1">Putative transport protein YpAngola_A3793</fullName>
    </recommendedName>
</protein>